<protein>
    <recommendedName>
        <fullName evidence="6">Kelch-like ECH-associated protein 1B</fullName>
    </recommendedName>
</protein>
<sequence length="587" mass="65690">MTECKAEVTPSASNGHRVFSYTLESHTAAAFAIMNELRRERQLCDVTLRVRYCPLDTHVDFVAHKVVLASSSPVFRAMFTNGLKECGMEVVPIEGIHPKVMGRLIEFAYTASISVGEKCVIHVMNGAVMYQIDSVVQACCDFLVEQLDPSNAIGIASFAEQIGCTELHQKAREYIYMNFSQVATQEEFFTLSHCQLVTLISRDELNVRCESEVFHACVAWVQYDREERRPYVQALLQAVRCHSLTPHFLQRQLEHFEWDAQSKDYLSQIFRDLTLHKPTKVIPLRTPKVPQLIYTVGGYFRQSLSFLEAFNPCSGAWLRLADLQVPRSGLAACVISGLLYAVGGRNNGPDGNMDSHTLDCYNPMNNCWRPCAHMSVPRNRIGVGVIDGMIYAVGGSHGCTHHNSVERYDPERDSWQLVSPMLTRRIGVGVAVINRLLYAVGGFDGTHRLSSAECYNPERDEWRSIAAMNTVRSGAGVCALGNYIYVMGGYDGTNQLNTVERYDVEKDSWSFSASMRHRRSALGVTTHHGRIYVLGGYDGNTFLDSVECFDPETDSWTEVTHMKSGRSGVGVAVTMEPCHKELIPCQC</sequence>
<accession>A0A2R8Q1W5</accession>
<accession>A9CP01</accession>
<accession>A9JSU4</accession>
<organism>
    <name type="scientific">Danio rerio</name>
    <name type="common">Zebrafish</name>
    <name type="synonym">Brachydanio rerio</name>
    <dbReference type="NCBI Taxonomy" id="7955"/>
    <lineage>
        <taxon>Eukaryota</taxon>
        <taxon>Metazoa</taxon>
        <taxon>Chordata</taxon>
        <taxon>Craniata</taxon>
        <taxon>Vertebrata</taxon>
        <taxon>Euteleostomi</taxon>
        <taxon>Actinopterygii</taxon>
        <taxon>Neopterygii</taxon>
        <taxon>Teleostei</taxon>
        <taxon>Ostariophysi</taxon>
        <taxon>Cypriniformes</taxon>
        <taxon>Danionidae</taxon>
        <taxon>Danioninae</taxon>
        <taxon>Danio</taxon>
    </lineage>
</organism>
<name>KEP1B_DANRE</name>
<evidence type="ECO:0000250" key="1">
    <source>
        <dbReference type="UniProtKB" id="Q9Z2X8"/>
    </source>
</evidence>
<evidence type="ECO:0000255" key="2"/>
<evidence type="ECO:0000255" key="3">
    <source>
        <dbReference type="PROSITE-ProRule" id="PRU00037"/>
    </source>
</evidence>
<evidence type="ECO:0000269" key="4">
    <source>
    </source>
</evidence>
<evidence type="ECO:0000269" key="5">
    <source>
    </source>
</evidence>
<evidence type="ECO:0000303" key="6">
    <source>
    </source>
</evidence>
<evidence type="ECO:0000305" key="7"/>
<evidence type="ECO:0000312" key="8">
    <source>
        <dbReference type="ZFIN" id="ZDB-GENE-080508-1"/>
    </source>
</evidence>
<comment type="function">
    <text evidence="1 4">Substrate-specific adapter of a BCR (BTB-CUL3-RBX1) E3 ubiquitin ligase complex that regulates the response to oxidative stress by targeting nfe2l2/nrf2 for ubiquitination (PubMed:18057000). Keap1 acts as a key sensor of oxidative and electrophilic stress: in normal conditions, the BCR(KEAP1) complex mediates ubiquitination and degradation of nfe2l2/nrf2, a transcription factor regulating expression of many cytoprotective genes (PubMed:18057000). In response to oxidative stress, different electrophile metabolites trigger non-enzymatic covalent modifications of highly reactive cysteine residues in KEAP1, leading to inactivate the ubiquitin ligase activity of the BCR(KEAP1) complex, promoting nfe2l2/nrf2 nuclear accumulation and expression of phase II detoxifying enzymes (By similarity).</text>
</comment>
<comment type="activity regulation">
    <text evidence="1">Ubiquitin ligase activity of the BCR(KEAP1) complex is inhibited by oxidative stress and electrophile metabolites such as sulforaphane. Electrophile metabolites react with reactive cysteine residues in keap1 and trigger non-enzymatic covalent modifications of these cysteine residues, leading to inactivate the ubiquitin ligase activity of the BCR(KEAP1) complex.</text>
</comment>
<comment type="pathway">
    <text evidence="1">Protein modification; protein ubiquitination.</text>
</comment>
<comment type="subunit">
    <text evidence="1 4">Homodimer and heterodimer; heterodimerizes with keap1a (PubMed:18057000). Component of the BCR(KEAP1) E3 ubiquitin ligase complex, at least composed of 2 molecules of cul3, 2 molecules of keap1 (keap1a and/or keap1b), and rbx1 (By similarity). Interacts with nfe2l2/nrf2; the interaction is direct (By similarity).</text>
</comment>
<comment type="subcellular location">
    <subcellularLocation>
        <location evidence="1">Cytoplasm</location>
    </subcellularLocation>
    <subcellularLocation>
        <location evidence="1">Nucleus</location>
    </subcellularLocation>
    <text evidence="1">Mainly cytoplasmic.</text>
</comment>
<comment type="alternative products">
    <event type="alternative splicing"/>
    <isoform>
        <id>A0A2R8Q1W5-1</id>
        <name>1</name>
        <sequence type="displayed"/>
    </isoform>
    <isoform>
        <id>A0A2R8Q1W5-3</id>
        <name>2</name>
        <sequence type="described" ref="VSP_060371"/>
    </isoform>
</comment>
<comment type="tissue specificity">
    <text evidence="4">Widely expressed.</text>
</comment>
<comment type="domain">
    <text evidence="4 5">Keap1 contains reactive cysteine residues that act as sensors for endogenously produced and exogenously encountered small molecules, which react with sulfhydryl groups and modify the cysteine sensors, leading to impair ability of the BCR(KEAP1) complex to ubiquitinate target proteins.</text>
</comment>
<comment type="PTM">
    <text evidence="1">Non-enzymatic covalent modifications of reactive cysteines by electrophile metabolites inactivate the BCR(KEAP1) complex.</text>
</comment>
<comment type="similarity">
    <text evidence="7">Belongs to the KEAP1 family.</text>
</comment>
<dbReference type="EMBL" id="AB271119">
    <property type="protein sequence ID" value="BAF95684.1"/>
    <property type="molecule type" value="mRNA"/>
</dbReference>
<dbReference type="EMBL" id="CU693486">
    <property type="status" value="NOT_ANNOTATED_CDS"/>
    <property type="molecule type" value="Genomic_DNA"/>
</dbReference>
<dbReference type="EMBL" id="BC155079">
    <property type="protein sequence ID" value="AAI55080.1"/>
    <property type="molecule type" value="mRNA"/>
</dbReference>
<dbReference type="RefSeq" id="NP_001106948.1">
    <molecule id="A0A2R8Q1W5-3"/>
    <property type="nucleotide sequence ID" value="NM_001113477.1"/>
</dbReference>
<dbReference type="RefSeq" id="XP_005168742.1">
    <molecule id="A0A2R8Q1W5-3"/>
    <property type="nucleotide sequence ID" value="XM_005168685.4"/>
</dbReference>
<dbReference type="RefSeq" id="XP_021332414.1">
    <molecule id="A0A2R8Q1W5-3"/>
    <property type="nucleotide sequence ID" value="XM_021476739.2"/>
</dbReference>
<dbReference type="SMR" id="A0A2R8Q1W5"/>
<dbReference type="FunCoup" id="A0A2R8Q1W5">
    <property type="interactions" value="1643"/>
</dbReference>
<dbReference type="STRING" id="7955.ENSDARP00000124228"/>
<dbReference type="PaxDb" id="7955-ENSDARP00000124228"/>
<dbReference type="Ensembl" id="ENSDART00000186561">
    <molecule id="A0A2R8Q1W5-1"/>
    <property type="protein sequence ID" value="ENSDARP00000147759"/>
    <property type="gene ID" value="ENSDARG00000074634"/>
</dbReference>
<dbReference type="GeneID" id="100003679"/>
<dbReference type="KEGG" id="dre:100003679"/>
<dbReference type="AGR" id="ZFIN:ZDB-GENE-080508-1"/>
<dbReference type="CTD" id="100003679"/>
<dbReference type="ZFIN" id="ZDB-GENE-080508-1">
    <property type="gene designation" value="keap1b"/>
</dbReference>
<dbReference type="eggNOG" id="KOG4441">
    <property type="taxonomic scope" value="Eukaryota"/>
</dbReference>
<dbReference type="HOGENOM" id="CLU_004253_14_3_1"/>
<dbReference type="InParanoid" id="A0A2R8Q1W5"/>
<dbReference type="OMA" id="TECLTEY"/>
<dbReference type="OrthoDB" id="45365at2759"/>
<dbReference type="TreeFam" id="TF329218"/>
<dbReference type="Reactome" id="R-DRE-5689880">
    <property type="pathway name" value="Ub-specific processing proteases"/>
</dbReference>
<dbReference type="Reactome" id="R-DRE-8951664">
    <property type="pathway name" value="Neddylation"/>
</dbReference>
<dbReference type="Reactome" id="R-DRE-9755511">
    <property type="pathway name" value="KEAP1-NFE2L2 pathway"/>
</dbReference>
<dbReference type="Reactome" id="R-DRE-983168">
    <property type="pathway name" value="Antigen processing: Ubiquitination &amp; Proteasome degradation"/>
</dbReference>
<dbReference type="UniPathway" id="UPA00143"/>
<dbReference type="PRO" id="PR:A0A2R8Q1W5"/>
<dbReference type="Proteomes" id="UP000000437">
    <property type="component" value="Chromosome 6"/>
</dbReference>
<dbReference type="Bgee" id="ENSDARG00000074634">
    <property type="expression patterns" value="Expressed in muscle tissue and 21 other cell types or tissues"/>
</dbReference>
<dbReference type="ExpressionAtlas" id="A0A2R8Q1W5">
    <property type="expression patterns" value="baseline and differential"/>
</dbReference>
<dbReference type="GO" id="GO:0031463">
    <property type="term" value="C:Cul3-RING ubiquitin ligase complex"/>
    <property type="evidence" value="ECO:0000318"/>
    <property type="project" value="GO_Central"/>
</dbReference>
<dbReference type="GO" id="GO:0005737">
    <property type="term" value="C:cytoplasm"/>
    <property type="evidence" value="ECO:0000250"/>
    <property type="project" value="UniProtKB"/>
</dbReference>
<dbReference type="GO" id="GO:0016234">
    <property type="term" value="C:inclusion body"/>
    <property type="evidence" value="ECO:0000250"/>
    <property type="project" value="UniProtKB"/>
</dbReference>
<dbReference type="GO" id="GO:0005634">
    <property type="term" value="C:nucleus"/>
    <property type="evidence" value="ECO:0007669"/>
    <property type="project" value="UniProtKB-SubCell"/>
</dbReference>
<dbReference type="GO" id="GO:1990756">
    <property type="term" value="F:ubiquitin-like ligase-substrate adaptor activity"/>
    <property type="evidence" value="ECO:0000318"/>
    <property type="project" value="GO_Central"/>
</dbReference>
<dbReference type="GO" id="GO:0034599">
    <property type="term" value="P:cellular response to oxidative stress"/>
    <property type="evidence" value="ECO:0000250"/>
    <property type="project" value="UniProtKB"/>
</dbReference>
<dbReference type="GO" id="GO:0071379">
    <property type="term" value="P:cellular response to prostaglandin stimulus"/>
    <property type="evidence" value="ECO:0000316"/>
    <property type="project" value="ZFIN"/>
</dbReference>
<dbReference type="GO" id="GO:0071466">
    <property type="term" value="P:cellular response to xenobiotic stimulus"/>
    <property type="evidence" value="ECO:0000316"/>
    <property type="project" value="ZFIN"/>
</dbReference>
<dbReference type="GO" id="GO:0030536">
    <property type="term" value="P:larval feeding behavior"/>
    <property type="evidence" value="ECO:0000316"/>
    <property type="project" value="ZFIN"/>
</dbReference>
<dbReference type="GO" id="GO:0043161">
    <property type="term" value="P:proteasome-mediated ubiquitin-dependent protein catabolic process"/>
    <property type="evidence" value="ECO:0000318"/>
    <property type="project" value="GO_Central"/>
</dbReference>
<dbReference type="GO" id="GO:0016567">
    <property type="term" value="P:protein ubiquitination"/>
    <property type="evidence" value="ECO:0000315"/>
    <property type="project" value="UniProtKB"/>
</dbReference>
<dbReference type="GO" id="GO:0010506">
    <property type="term" value="P:regulation of autophagy"/>
    <property type="evidence" value="ECO:0000250"/>
    <property type="project" value="UniProtKB"/>
</dbReference>
<dbReference type="GO" id="GO:0006511">
    <property type="term" value="P:ubiquitin-dependent protein catabolic process"/>
    <property type="evidence" value="ECO:0000315"/>
    <property type="project" value="UniProtKB"/>
</dbReference>
<dbReference type="CDD" id="cd18458">
    <property type="entry name" value="BACK_KLHL19_KEAP1"/>
    <property type="match status" value="1"/>
</dbReference>
<dbReference type="CDD" id="cd18248">
    <property type="entry name" value="BTB_POZ_KLHL19_KEAP1"/>
    <property type="match status" value="1"/>
</dbReference>
<dbReference type="FunFam" id="2.120.10.80:FF:000024">
    <property type="entry name" value="Kelch-like ECH-associated protein 1"/>
    <property type="match status" value="1"/>
</dbReference>
<dbReference type="FunFam" id="1.25.40.420:FF:000001">
    <property type="entry name" value="Kelch-like family member 12"/>
    <property type="match status" value="1"/>
</dbReference>
<dbReference type="FunFam" id="3.30.710.10:FF:000001">
    <property type="entry name" value="Kelch-like family member 20"/>
    <property type="match status" value="1"/>
</dbReference>
<dbReference type="Gene3D" id="1.25.40.420">
    <property type="match status" value="1"/>
</dbReference>
<dbReference type="Gene3D" id="2.120.10.80">
    <property type="entry name" value="Kelch-type beta propeller"/>
    <property type="match status" value="1"/>
</dbReference>
<dbReference type="Gene3D" id="3.30.710.10">
    <property type="entry name" value="Potassium Channel Kv1.1, Chain A"/>
    <property type="match status" value="1"/>
</dbReference>
<dbReference type="InterPro" id="IPR011705">
    <property type="entry name" value="BACK"/>
</dbReference>
<dbReference type="InterPro" id="IPR017096">
    <property type="entry name" value="BTB-kelch_protein"/>
</dbReference>
<dbReference type="InterPro" id="IPR000210">
    <property type="entry name" value="BTB/POZ_dom"/>
</dbReference>
<dbReference type="InterPro" id="IPR047098">
    <property type="entry name" value="KEAP1_BACK"/>
</dbReference>
<dbReference type="InterPro" id="IPR030563">
    <property type="entry name" value="KEAP1_BTB_POZ_dom"/>
</dbReference>
<dbReference type="InterPro" id="IPR015915">
    <property type="entry name" value="Kelch-typ_b-propeller"/>
</dbReference>
<dbReference type="InterPro" id="IPR006652">
    <property type="entry name" value="Kelch_1"/>
</dbReference>
<dbReference type="InterPro" id="IPR011333">
    <property type="entry name" value="SKP1/BTB/POZ_sf"/>
</dbReference>
<dbReference type="PANTHER" id="PTHR24412">
    <property type="entry name" value="KELCH PROTEIN"/>
    <property type="match status" value="1"/>
</dbReference>
<dbReference type="PANTHER" id="PTHR24412:SF497">
    <property type="entry name" value="KELCH-LIKE PROTEIN 18"/>
    <property type="match status" value="1"/>
</dbReference>
<dbReference type="Pfam" id="PF07707">
    <property type="entry name" value="BACK"/>
    <property type="match status" value="1"/>
</dbReference>
<dbReference type="Pfam" id="PF00651">
    <property type="entry name" value="BTB"/>
    <property type="match status" value="1"/>
</dbReference>
<dbReference type="Pfam" id="PF01344">
    <property type="entry name" value="Kelch_1"/>
    <property type="match status" value="2"/>
</dbReference>
<dbReference type="Pfam" id="PF24681">
    <property type="entry name" value="Kelch_KLHDC2_KLHL20_DRC7"/>
    <property type="match status" value="1"/>
</dbReference>
<dbReference type="PIRSF" id="PIRSF037037">
    <property type="entry name" value="Kelch-like_protein_gigaxonin"/>
    <property type="match status" value="1"/>
</dbReference>
<dbReference type="SMART" id="SM00875">
    <property type="entry name" value="BACK"/>
    <property type="match status" value="1"/>
</dbReference>
<dbReference type="SMART" id="SM00225">
    <property type="entry name" value="BTB"/>
    <property type="match status" value="1"/>
</dbReference>
<dbReference type="SMART" id="SM00612">
    <property type="entry name" value="Kelch"/>
    <property type="match status" value="6"/>
</dbReference>
<dbReference type="SUPFAM" id="SSF117281">
    <property type="entry name" value="Kelch motif"/>
    <property type="match status" value="1"/>
</dbReference>
<dbReference type="SUPFAM" id="SSF54695">
    <property type="entry name" value="POZ domain"/>
    <property type="match status" value="1"/>
</dbReference>
<dbReference type="PROSITE" id="PS50097">
    <property type="entry name" value="BTB"/>
    <property type="match status" value="1"/>
</dbReference>
<gene>
    <name evidence="6 8" type="primary">keap1b</name>
</gene>
<proteinExistence type="evidence at protein level"/>
<keyword id="KW-0025">Alternative splicing</keyword>
<keyword id="KW-0963">Cytoplasm</keyword>
<keyword id="KW-0880">Kelch repeat</keyword>
<keyword id="KW-0539">Nucleus</keyword>
<keyword id="KW-1185">Reference proteome</keyword>
<keyword id="KW-0677">Repeat</keyword>
<keyword id="KW-0833">Ubl conjugation pathway</keyword>
<feature type="chain" id="PRO_0000448290" description="Kelch-like ECH-associated protein 1B">
    <location>
        <begin position="1"/>
        <end position="587"/>
    </location>
</feature>
<feature type="domain" description="BTB" evidence="3">
    <location>
        <begin position="44"/>
        <end position="117"/>
    </location>
</feature>
<feature type="domain" description="BACK" evidence="2">
    <location>
        <begin position="153"/>
        <end position="253"/>
    </location>
</feature>
<feature type="repeat" description="Kelch 1" evidence="2">
    <location>
        <begin position="292"/>
        <end position="337"/>
    </location>
</feature>
<feature type="repeat" description="Kelch 2" evidence="2">
    <location>
        <begin position="338"/>
        <end position="388"/>
    </location>
</feature>
<feature type="repeat" description="Kelch 3" evidence="2">
    <location>
        <begin position="389"/>
        <end position="435"/>
    </location>
</feature>
<feature type="repeat" description="Kelch 4" evidence="2">
    <location>
        <begin position="436"/>
        <end position="482"/>
    </location>
</feature>
<feature type="repeat" description="Kelch 5" evidence="2">
    <location>
        <begin position="484"/>
        <end position="529"/>
    </location>
</feature>
<feature type="repeat" description="Kelch 6" evidence="2">
    <location>
        <begin position="530"/>
        <end position="576"/>
    </location>
</feature>
<feature type="site" description="Sensor for electrophilic agents" evidence="5">
    <location>
        <position position="119"/>
    </location>
</feature>
<feature type="site" description="Sensor for electrophilic agents" evidence="4">
    <location>
        <position position="241"/>
    </location>
</feature>
<feature type="site" description="Sensor for electrophilic agents" evidence="1">
    <location>
        <position position="399"/>
    </location>
</feature>
<feature type="splice variant" id="VSP_060371" description="In isoform 2.">
    <original>M</original>
    <variation>MLAAAGM</variation>
    <location>
        <position position="1"/>
    </location>
</feature>
<feature type="mutagenesis site" description="Decreased response to oxidative stress." evidence="5">
    <original>K</original>
    <variation>T</variation>
    <location>
        <position position="118"/>
    </location>
</feature>
<feature type="mutagenesis site" description="Substitution with a small side chain that prevents covalent modification by an electrophile; promotes constitutive ubiquitination of nfe2l2/nrf2 and subsequent repression of phase 2 detoxifying enzymes." evidence="5">
    <original>C</original>
    <variation>S</variation>
    <location>
        <position position="119"/>
    </location>
</feature>
<feature type="mutagenesis site" description="Substitution with a bulky side chain that mimicks covalent modification by an electrophile; prevents ubiquitination and degradation of nfe2l2/nrf2, leading to constitutive activation of nfe2l2/nrf2." evidence="5">
    <original>C</original>
    <variation>W</variation>
    <location>
        <position position="119"/>
    </location>
</feature>
<feature type="mutagenesis site" description="Abolishes repression of nfe2l2/nrf2-dependent gene expression." evidence="4">
    <original>C</original>
    <variation>S</variation>
    <location>
        <position position="241"/>
    </location>
</feature>
<feature type="sequence conflict" description="In Ref. 3; AAI55080." evidence="7" ref="3">
    <original>C</original>
    <variation>R</variation>
    <location>
        <position position="333"/>
    </location>
</feature>
<feature type="sequence conflict" description="In Ref. 3; AAI55080." evidence="7" ref="3">
    <original>T</original>
    <variation>S</variation>
    <location>
        <position position="400"/>
    </location>
</feature>
<reference key="1">
    <citation type="journal article" date="2008" name="J. Biol. Chem.">
        <title>Molecular evolution of Keap1. Two Keap1 molecules with distinctive intervening region structures are conserved among fish.</title>
        <authorList>
            <person name="Li L."/>
            <person name="Kobayashi M."/>
            <person name="Kaneko H."/>
            <person name="Nakajima-Takagi Y."/>
            <person name="Nakayama Y."/>
            <person name="Yamamoto M."/>
        </authorList>
    </citation>
    <scope>NUCLEOTIDE SEQUENCE [MRNA] (ISOFORM 2)</scope>
    <scope>FUNCTION</scope>
    <scope>SUBUNIT</scope>
    <scope>DOMAIN</scope>
    <scope>TISSUE SPECIFICITY</scope>
    <scope>MUTAGENESIS OF CYS-241</scope>
</reference>
<reference key="2">
    <citation type="journal article" date="2013" name="Nature">
        <title>The zebrafish reference genome sequence and its relationship to the human genome.</title>
        <authorList>
            <person name="Howe K."/>
            <person name="Clark M.D."/>
            <person name="Torroja C.F."/>
            <person name="Torrance J."/>
            <person name="Berthelot C."/>
            <person name="Muffato M."/>
            <person name="Collins J.E."/>
            <person name="Humphray S."/>
            <person name="McLaren K."/>
            <person name="Matthews L."/>
            <person name="McLaren S."/>
            <person name="Sealy I."/>
            <person name="Caccamo M."/>
            <person name="Churcher C."/>
            <person name="Scott C."/>
            <person name="Barrett J.C."/>
            <person name="Koch R."/>
            <person name="Rauch G.J."/>
            <person name="White S."/>
            <person name="Chow W."/>
            <person name="Kilian B."/>
            <person name="Quintais L.T."/>
            <person name="Guerra-Assuncao J.A."/>
            <person name="Zhou Y."/>
            <person name="Gu Y."/>
            <person name="Yen J."/>
            <person name="Vogel J.H."/>
            <person name="Eyre T."/>
            <person name="Redmond S."/>
            <person name="Banerjee R."/>
            <person name="Chi J."/>
            <person name="Fu B."/>
            <person name="Langley E."/>
            <person name="Maguire S.F."/>
            <person name="Laird G.K."/>
            <person name="Lloyd D."/>
            <person name="Kenyon E."/>
            <person name="Donaldson S."/>
            <person name="Sehra H."/>
            <person name="Almeida-King J."/>
            <person name="Loveland J."/>
            <person name="Trevanion S."/>
            <person name="Jones M."/>
            <person name="Quail M."/>
            <person name="Willey D."/>
            <person name="Hunt A."/>
            <person name="Burton J."/>
            <person name="Sims S."/>
            <person name="McLay K."/>
            <person name="Plumb B."/>
            <person name="Davis J."/>
            <person name="Clee C."/>
            <person name="Oliver K."/>
            <person name="Clark R."/>
            <person name="Riddle C."/>
            <person name="Elliot D."/>
            <person name="Threadgold G."/>
            <person name="Harden G."/>
            <person name="Ware D."/>
            <person name="Begum S."/>
            <person name="Mortimore B."/>
            <person name="Kerry G."/>
            <person name="Heath P."/>
            <person name="Phillimore B."/>
            <person name="Tracey A."/>
            <person name="Corby N."/>
            <person name="Dunn M."/>
            <person name="Johnson C."/>
            <person name="Wood J."/>
            <person name="Clark S."/>
            <person name="Pelan S."/>
            <person name="Griffiths G."/>
            <person name="Smith M."/>
            <person name="Glithero R."/>
            <person name="Howden P."/>
            <person name="Barker N."/>
            <person name="Lloyd C."/>
            <person name="Stevens C."/>
            <person name="Harley J."/>
            <person name="Holt K."/>
            <person name="Panagiotidis G."/>
            <person name="Lovell J."/>
            <person name="Beasley H."/>
            <person name="Henderson C."/>
            <person name="Gordon D."/>
            <person name="Auger K."/>
            <person name="Wright D."/>
            <person name="Collins J."/>
            <person name="Raisen C."/>
            <person name="Dyer L."/>
            <person name="Leung K."/>
            <person name="Robertson L."/>
            <person name="Ambridge K."/>
            <person name="Leongamornlert D."/>
            <person name="McGuire S."/>
            <person name="Gilderthorp R."/>
            <person name="Griffiths C."/>
            <person name="Manthravadi D."/>
            <person name="Nichol S."/>
            <person name="Barker G."/>
            <person name="Whitehead S."/>
            <person name="Kay M."/>
            <person name="Brown J."/>
            <person name="Murnane C."/>
            <person name="Gray E."/>
            <person name="Humphries M."/>
            <person name="Sycamore N."/>
            <person name="Barker D."/>
            <person name="Saunders D."/>
            <person name="Wallis J."/>
            <person name="Babbage A."/>
            <person name="Hammond S."/>
            <person name="Mashreghi-Mohammadi M."/>
            <person name="Barr L."/>
            <person name="Martin S."/>
            <person name="Wray P."/>
            <person name="Ellington A."/>
            <person name="Matthews N."/>
            <person name="Ellwood M."/>
            <person name="Woodmansey R."/>
            <person name="Clark G."/>
            <person name="Cooper J."/>
            <person name="Tromans A."/>
            <person name="Grafham D."/>
            <person name="Skuce C."/>
            <person name="Pandian R."/>
            <person name="Andrews R."/>
            <person name="Harrison E."/>
            <person name="Kimberley A."/>
            <person name="Garnett J."/>
            <person name="Fosker N."/>
            <person name="Hall R."/>
            <person name="Garner P."/>
            <person name="Kelly D."/>
            <person name="Bird C."/>
            <person name="Palmer S."/>
            <person name="Gehring I."/>
            <person name="Berger A."/>
            <person name="Dooley C.M."/>
            <person name="Ersan-Urun Z."/>
            <person name="Eser C."/>
            <person name="Geiger H."/>
            <person name="Geisler M."/>
            <person name="Karotki L."/>
            <person name="Kirn A."/>
            <person name="Konantz J."/>
            <person name="Konantz M."/>
            <person name="Oberlander M."/>
            <person name="Rudolph-Geiger S."/>
            <person name="Teucke M."/>
            <person name="Lanz C."/>
            <person name="Raddatz G."/>
            <person name="Osoegawa K."/>
            <person name="Zhu B."/>
            <person name="Rapp A."/>
            <person name="Widaa S."/>
            <person name="Langford C."/>
            <person name="Yang F."/>
            <person name="Schuster S.C."/>
            <person name="Carter N.P."/>
            <person name="Harrow J."/>
            <person name="Ning Z."/>
            <person name="Herrero J."/>
            <person name="Searle S.M."/>
            <person name="Enright A."/>
            <person name="Geisler R."/>
            <person name="Plasterk R.H."/>
            <person name="Lee C."/>
            <person name="Westerfield M."/>
            <person name="de Jong P.J."/>
            <person name="Zon L.I."/>
            <person name="Postlethwait J.H."/>
            <person name="Nusslein-Volhard C."/>
            <person name="Hubbard T.J."/>
            <person name="Roest Crollius H."/>
            <person name="Rogers J."/>
            <person name="Stemple D.L."/>
        </authorList>
    </citation>
    <scope>NUCLEOTIDE SEQUENCE [LARGE SCALE GENOMIC DNA]</scope>
    <source>
        <strain>Tuebingen</strain>
    </source>
</reference>
<reference key="3">
    <citation type="submission" date="2007-11" db="EMBL/GenBank/DDBJ databases">
        <authorList>
            <consortium name="NIH - Zebrafish Gene Collection (ZGC) project"/>
        </authorList>
    </citation>
    <scope>NUCLEOTIDE SEQUENCE [LARGE SCALE MRNA]</scope>
    <source>
        <tissue>Embryo</tissue>
    </source>
</reference>
<reference key="4">
    <citation type="journal article" date="2009" name="Mol. Cell. Biol.">
        <title>The antioxidant defense system Keap1-Nrf2 comprises a multiple sensing mechanism for responding to a wide range of chemical compounds.</title>
        <authorList>
            <person name="Kobayashi M."/>
            <person name="Li L."/>
            <person name="Iwamoto N."/>
            <person name="Nakajima-Takagi Y."/>
            <person name="Kaneko H."/>
            <person name="Nakayama Y."/>
            <person name="Eguchi M."/>
            <person name="Wada Y."/>
            <person name="Kumagai Y."/>
            <person name="Yamamoto M."/>
        </authorList>
    </citation>
    <scope>DOMAIN</scope>
    <scope>MUTAGENESIS OF LYS-118 AND CYS-119</scope>
</reference>